<comment type="function">
    <text evidence="3 4 7 8 9 13 14 15 16">Serine/threonine-protein kinase required for cytoplasm to vacuole transport (Cvt) and autophagy as a part of the autophagy-specific VPS34 PI3-kinase complex I (PubMed:11157979). This complex is essential to recruit the ATG8-phosphatidylinositol conjugate and the ATG12-ATG5 conjugate to the pre-autophagosomal structure (PubMed:11157979, PubMed:1756716, PubMed:1988155, PubMed:7989323). Is also involved in endosome-to-Golgi retrograde transport as part of the VPS34 PI3-kinase complex II (PubMed:11157979, PubMed:12244127, PubMed:8649377). This second complex is required for the endosome-to-Golgi retrieval of PEP1 and KEX2, and the recruitment of VPS5 and VPS7, two components of the retromer complex, to endosomal membranes (probably through the synthesis of a specific pool of phosphatidylinositol 3-phosphate recruiting the retromer to the endosomes) (PubMed:12244127, PubMed:7989323, PubMed:8387919, PubMed:8509446, PubMed:8649377). By regulating VPS34 kinase activity, VPS15 appears to be essential for the efficient delivery of soluble hydrolases to the yeast vacuole (PubMed:8387919, PubMed:8509446). May function as a G protein beta subunit to propagate the pheromone response at the endosome with GPA1 (PubMed:19445518).</text>
</comment>
<comment type="catalytic activity">
    <reaction evidence="7 9 13">
        <text>L-seryl-[protein] + ATP = O-phospho-L-seryl-[protein] + ADP + H(+)</text>
        <dbReference type="Rhea" id="RHEA:17989"/>
        <dbReference type="Rhea" id="RHEA-COMP:9863"/>
        <dbReference type="Rhea" id="RHEA-COMP:11604"/>
        <dbReference type="ChEBI" id="CHEBI:15378"/>
        <dbReference type="ChEBI" id="CHEBI:29999"/>
        <dbReference type="ChEBI" id="CHEBI:30616"/>
        <dbReference type="ChEBI" id="CHEBI:83421"/>
        <dbReference type="ChEBI" id="CHEBI:456216"/>
        <dbReference type="EC" id="2.7.11.1"/>
    </reaction>
    <physiologicalReaction direction="left-to-right" evidence="7 9 13">
        <dbReference type="Rhea" id="RHEA:17990"/>
    </physiologicalReaction>
</comment>
<comment type="catalytic activity">
    <reaction evidence="7 9 13">
        <text>L-threonyl-[protein] + ATP = O-phospho-L-threonyl-[protein] + ADP + H(+)</text>
        <dbReference type="Rhea" id="RHEA:46608"/>
        <dbReference type="Rhea" id="RHEA-COMP:11060"/>
        <dbReference type="Rhea" id="RHEA-COMP:11605"/>
        <dbReference type="ChEBI" id="CHEBI:15378"/>
        <dbReference type="ChEBI" id="CHEBI:30013"/>
        <dbReference type="ChEBI" id="CHEBI:30616"/>
        <dbReference type="ChEBI" id="CHEBI:61977"/>
        <dbReference type="ChEBI" id="CHEBI:456216"/>
        <dbReference type="EC" id="2.7.11.1"/>
    </reaction>
    <physiologicalReaction direction="left-to-right" evidence="7 9 13">
        <dbReference type="Rhea" id="RHEA:46609"/>
    </physiologicalReaction>
</comment>
<comment type="subunit">
    <text evidence="8 10 11">Component of the autophagy-specific VPS34 PI3-kinase complex I composed of VPS15, VPS30, VPS34, ATG14 and ATG38; and of the VPS34 PI3-kinase complex II composed of VPS15, VPS30, VPS34 and VPS38 (PubMed:24165940, PubMed:26450213). Interacts directly with ATG14 and GPA1 (PubMed:19445518). Interacts directly with VPS34 (PubMed:19445518).</text>
</comment>
<comment type="interaction">
    <interactant intactId="EBI-20347">
        <id>P22219</id>
    </interactant>
    <interactant intactId="EBI-7376">
        <id>P08539</id>
        <label>GPA1</label>
    </interactant>
    <organismsDiffer>false</organismsDiffer>
    <experiments>2</experiments>
</comment>
<comment type="interaction">
    <interactant intactId="EBI-20347">
        <id>P22219</id>
    </interactant>
    <interactant intactId="EBI-20405">
        <id>P22543</id>
        <label>VPS34</label>
    </interactant>
    <organismsDiffer>false</organismsDiffer>
    <experiments>4</experiments>
</comment>
<comment type="subcellular location">
    <subcellularLocation>
        <location evidence="3 5 9">Golgi apparatus</location>
        <location evidence="3 5 9">trans-Golgi network membrane</location>
        <topology evidence="7">Lipid-anchor</topology>
    </subcellularLocation>
    <subcellularLocation>
        <location evidence="3 5 9">Endosome membrane</location>
        <topology evidence="7">Lipid-anchor</topology>
    </subcellularLocation>
</comment>
<comment type="domain">
    <text evidence="8">The WD region forms a seven-bladed propeller resembling that of typical G-beta subunits and is required to bind GPA1 and ATG14.</text>
</comment>
<comment type="domain">
    <text evidence="7">Truncation of 30 residues from the C-terminus results in a temperature-conditional defect in protein sorting.</text>
</comment>
<comment type="PTM">
    <text evidence="9 13">Autophosphorylated.</text>
</comment>
<comment type="disruption phenotype">
    <text evidence="12">Decreases TORC1 activation in response to glutamine.</text>
</comment>
<comment type="miscellaneous">
    <text evidence="6">Present with 279 molecules/cell in log phase SD medium.</text>
</comment>
<comment type="similarity">
    <text evidence="2">Belongs to the protein kinase superfamily. Ser/Thr protein kinase family.</text>
</comment>
<name>VPS15_YEAST</name>
<feature type="initiator methionine" description="Removed">
    <location>
        <position position="1"/>
    </location>
</feature>
<feature type="chain" id="PRO_0000086802" description="Serine/threonine-protein kinase VPS15">
    <location>
        <begin position="2"/>
        <end position="1454"/>
    </location>
</feature>
<feature type="domain" description="Protein kinase" evidence="2">
    <location>
        <begin position="27"/>
        <end position="300"/>
    </location>
</feature>
<feature type="repeat" description="HEAT 1" evidence="1">
    <location>
        <begin position="460"/>
        <end position="497"/>
    </location>
</feature>
<feature type="repeat" description="HEAT 2" evidence="1">
    <location>
        <begin position="576"/>
        <end position="613"/>
    </location>
</feature>
<feature type="repeat" description="HEAT 3" evidence="1">
    <location>
        <begin position="615"/>
        <end position="652"/>
    </location>
</feature>
<feature type="repeat" description="HEAT 4" evidence="1">
    <location>
        <begin position="654"/>
        <end position="691"/>
    </location>
</feature>
<feature type="repeat" description="WD 1" evidence="1">
    <location>
        <begin position="1078"/>
        <end position="1118"/>
    </location>
</feature>
<feature type="repeat" description="WD 2" evidence="1">
    <location>
        <begin position="1126"/>
        <end position="1165"/>
    </location>
</feature>
<feature type="repeat" description="WD 3" evidence="1">
    <location>
        <begin position="1229"/>
        <end position="1268"/>
    </location>
</feature>
<feature type="repeat" description="WD 4" evidence="1">
    <location>
        <begin position="1275"/>
        <end position="1315"/>
    </location>
</feature>
<feature type="repeat" description="WD 5" evidence="1">
    <location>
        <begin position="1344"/>
        <end position="1382"/>
    </location>
</feature>
<feature type="repeat" description="WD 6" evidence="1">
    <location>
        <begin position="1422"/>
        <end position="1454"/>
    </location>
</feature>
<feature type="active site" description="Proton acceptor" evidence="2">
    <location>
        <position position="147"/>
    </location>
</feature>
<feature type="binding site" evidence="2">
    <location>
        <begin position="33"/>
        <end position="41"/>
    </location>
    <ligand>
        <name>ATP</name>
        <dbReference type="ChEBI" id="CHEBI:30616"/>
    </ligand>
</feature>
<feature type="binding site" evidence="2">
    <location>
        <position position="54"/>
    </location>
    <ligand>
        <name>ATP</name>
        <dbReference type="ChEBI" id="CHEBI:30616"/>
    </ligand>
</feature>
<feature type="lipid moiety-binding region" description="N-myristoyl glycine" evidence="7">
    <location>
        <position position="2"/>
    </location>
</feature>
<feature type="mutagenesis site" description="No myristoylation, but still membrane-association and normal activity." evidence="7">
    <original>G</original>
    <variation>A</variation>
    <variation>W</variation>
    <location>
        <position position="2"/>
    </location>
</feature>
<feature type="mutagenesis site" description="Loss of activity." evidence="7">
    <original>K</original>
    <variation>D</variation>
    <location>
        <position position="54"/>
    </location>
</feature>
<feature type="mutagenesis site" description="Loss of activity." evidence="7">
    <original>D</original>
    <variation>R</variation>
    <location>
        <position position="147"/>
    </location>
</feature>
<feature type="mutagenesis site" description="Loss of activity." evidence="7">
    <original>K</original>
    <variation>D</variation>
    <location>
        <position position="149"/>
    </location>
</feature>
<feature type="mutagenesis site" description="Modest effect on activity and normal CPY sorting." evidence="7">
    <original>E</original>
    <variation>R</variation>
    <location>
        <position position="151"/>
    </location>
</feature>
<feature type="mutagenesis site" description="Loss of activity." evidence="9">
    <original>D</original>
    <variation>R</variation>
    <location>
        <position position="165"/>
    </location>
</feature>
<feature type="mutagenesis site" description="Loss of activity. No activation of VPS34 kinase activity." evidence="9 14">
    <original>E</original>
    <variation>R</variation>
    <location>
        <position position="200"/>
    </location>
</feature>
<feature type="mutagenesis site" description="Diminishes the interaction with GPA1." evidence="8">
    <original>R</original>
    <variation>A</variation>
    <variation>K</variation>
    <location>
        <position position="1261"/>
    </location>
</feature>
<feature type="sequence conflict" description="In Ref. 2; CAA55602 and 3; CAA85050." evidence="19" ref="2 3">
    <original>A</original>
    <variation>T</variation>
    <location>
        <position position="134"/>
    </location>
</feature>
<feature type="sequence conflict" description="In Ref. 1; AAA35214." evidence="19" ref="1">
    <original>L</original>
    <variation>PV</variation>
    <location>
        <position position="443"/>
    </location>
</feature>
<feature type="sequence conflict" description="In Ref. 1; AAA35214." evidence="19" ref="1">
    <original>F</original>
    <variation>S</variation>
    <location>
        <position position="610"/>
    </location>
</feature>
<feature type="sequence conflict" description="In Ref. 1; AAA35214, 2; CAA55602 and 3; CAA85050." evidence="19" ref="1 2 3">
    <original>R</original>
    <variation>I</variation>
    <location>
        <position position="851"/>
    </location>
</feature>
<feature type="helix" evidence="23">
    <location>
        <begin position="1034"/>
        <end position="1036"/>
    </location>
</feature>
<feature type="helix" evidence="23">
    <location>
        <begin position="1046"/>
        <end position="1048"/>
    </location>
</feature>
<feature type="helix" evidence="23">
    <location>
        <begin position="1050"/>
        <end position="1052"/>
    </location>
</feature>
<feature type="helix" evidence="23">
    <location>
        <begin position="1064"/>
        <end position="1066"/>
    </location>
</feature>
<feature type="strand" evidence="23">
    <location>
        <begin position="1070"/>
        <end position="1075"/>
    </location>
</feature>
<feature type="turn" evidence="23">
    <location>
        <begin position="1077"/>
        <end position="1080"/>
    </location>
</feature>
<feature type="strand" evidence="23">
    <location>
        <begin position="1083"/>
        <end position="1089"/>
    </location>
</feature>
<feature type="strand" evidence="23">
    <location>
        <begin position="1091"/>
        <end position="1093"/>
    </location>
</feature>
<feature type="strand" evidence="23">
    <location>
        <begin position="1095"/>
        <end position="1100"/>
    </location>
</feature>
<feature type="strand" evidence="23">
    <location>
        <begin position="1103"/>
        <end position="1109"/>
    </location>
</feature>
<feature type="helix" evidence="23">
    <location>
        <begin position="1110"/>
        <end position="1114"/>
    </location>
</feature>
<feature type="strand" evidence="23">
    <location>
        <begin position="1122"/>
        <end position="1126"/>
    </location>
</feature>
<feature type="strand" evidence="23">
    <location>
        <begin position="1131"/>
        <end position="1136"/>
    </location>
</feature>
<feature type="strand" evidence="23">
    <location>
        <begin position="1140"/>
        <end position="1147"/>
    </location>
</feature>
<feature type="strand" evidence="23">
    <location>
        <begin position="1150"/>
        <end position="1162"/>
    </location>
</feature>
<feature type="strand" evidence="23">
    <location>
        <begin position="1165"/>
        <end position="1178"/>
    </location>
</feature>
<feature type="helix" evidence="23">
    <location>
        <begin position="1179"/>
        <end position="1182"/>
    </location>
</feature>
<feature type="strand" evidence="23">
    <location>
        <begin position="1188"/>
        <end position="1195"/>
    </location>
</feature>
<feature type="strand" evidence="23">
    <location>
        <begin position="1200"/>
        <end position="1206"/>
    </location>
</feature>
<feature type="strand" evidence="23">
    <location>
        <begin position="1209"/>
        <end position="1215"/>
    </location>
</feature>
<feature type="turn" evidence="23">
    <location>
        <begin position="1216"/>
        <end position="1218"/>
    </location>
</feature>
<feature type="strand" evidence="23">
    <location>
        <begin position="1221"/>
        <end position="1226"/>
    </location>
</feature>
<feature type="helix" evidence="23">
    <location>
        <begin position="1229"/>
        <end position="1231"/>
    </location>
</feature>
<feature type="strand" evidence="23">
    <location>
        <begin position="1234"/>
        <end position="1239"/>
    </location>
</feature>
<feature type="strand" evidence="23">
    <location>
        <begin position="1245"/>
        <end position="1250"/>
    </location>
</feature>
<feature type="strand" evidence="23">
    <location>
        <begin position="1255"/>
        <end position="1259"/>
    </location>
</feature>
<feature type="turn" evidence="23">
    <location>
        <begin position="1260"/>
        <end position="1263"/>
    </location>
</feature>
<feature type="strand" evidence="23">
    <location>
        <begin position="1264"/>
        <end position="1270"/>
    </location>
</feature>
<feature type="strand" evidence="23">
    <location>
        <begin position="1275"/>
        <end position="1282"/>
    </location>
</feature>
<feature type="turn" evidence="23">
    <location>
        <begin position="1284"/>
        <end position="1286"/>
    </location>
</feature>
<feature type="strand" evidence="23">
    <location>
        <begin position="1290"/>
        <end position="1297"/>
    </location>
</feature>
<feature type="strand" evidence="23">
    <location>
        <begin position="1300"/>
        <end position="1306"/>
    </location>
</feature>
<feature type="turn" evidence="23">
    <location>
        <begin position="1307"/>
        <end position="1310"/>
    </location>
</feature>
<feature type="strand" evidence="23">
    <location>
        <begin position="1311"/>
        <end position="1321"/>
    </location>
</feature>
<feature type="helix" evidence="23">
    <location>
        <begin position="1325"/>
        <end position="1328"/>
    </location>
</feature>
<feature type="helix" evidence="23">
    <location>
        <begin position="1335"/>
        <end position="1337"/>
    </location>
</feature>
<feature type="helix" evidence="23">
    <location>
        <begin position="1346"/>
        <end position="1349"/>
    </location>
</feature>
<feature type="strand" evidence="23">
    <location>
        <begin position="1352"/>
        <end position="1355"/>
    </location>
</feature>
<feature type="strand" evidence="23">
    <location>
        <begin position="1358"/>
        <end position="1363"/>
    </location>
</feature>
<feature type="helix" evidence="23">
    <location>
        <begin position="1364"/>
        <end position="1366"/>
    </location>
</feature>
<feature type="strand" evidence="23">
    <location>
        <begin position="1368"/>
        <end position="1373"/>
    </location>
</feature>
<feature type="helix" evidence="23">
    <location>
        <begin position="1377"/>
        <end position="1379"/>
    </location>
</feature>
<feature type="strand" evidence="23">
    <location>
        <begin position="1381"/>
        <end position="1384"/>
    </location>
</feature>
<feature type="strand" evidence="23">
    <location>
        <begin position="1392"/>
        <end position="1399"/>
    </location>
</feature>
<feature type="strand" evidence="23">
    <location>
        <begin position="1402"/>
        <end position="1408"/>
    </location>
</feature>
<feature type="strand" evidence="23">
    <location>
        <begin position="1427"/>
        <end position="1445"/>
    </location>
</feature>
<feature type="strand" evidence="23">
    <location>
        <begin position="1450"/>
        <end position="1454"/>
    </location>
</feature>
<evidence type="ECO:0000255" key="1"/>
<evidence type="ECO:0000255" key="2">
    <source>
        <dbReference type="PROSITE-ProRule" id="PRU00159"/>
    </source>
</evidence>
<evidence type="ECO:0000269" key="3">
    <source>
    </source>
</evidence>
<evidence type="ECO:0000269" key="4">
    <source>
    </source>
</evidence>
<evidence type="ECO:0000269" key="5">
    <source>
    </source>
</evidence>
<evidence type="ECO:0000269" key="6">
    <source>
    </source>
</evidence>
<evidence type="ECO:0000269" key="7">
    <source>
    </source>
</evidence>
<evidence type="ECO:0000269" key="8">
    <source>
    </source>
</evidence>
<evidence type="ECO:0000269" key="9">
    <source>
    </source>
</evidence>
<evidence type="ECO:0000269" key="10">
    <source>
    </source>
</evidence>
<evidence type="ECO:0000269" key="11">
    <source>
    </source>
</evidence>
<evidence type="ECO:0000269" key="12">
    <source>
    </source>
</evidence>
<evidence type="ECO:0000269" key="13">
    <source>
    </source>
</evidence>
<evidence type="ECO:0000269" key="14">
    <source>
    </source>
</evidence>
<evidence type="ECO:0000269" key="15">
    <source>
    </source>
</evidence>
<evidence type="ECO:0000269" key="16">
    <source>
    </source>
</evidence>
<evidence type="ECO:0000303" key="17">
    <source>
    </source>
</evidence>
<evidence type="ECO:0000303" key="18">
    <source>
    </source>
</evidence>
<evidence type="ECO:0000305" key="19"/>
<evidence type="ECO:0007744" key="20">
    <source>
        <dbReference type="PDB" id="3GRE"/>
    </source>
</evidence>
<evidence type="ECO:0007744" key="21">
    <source>
        <dbReference type="PDB" id="5DFZ"/>
    </source>
</evidence>
<evidence type="ECO:0007744" key="22">
    <source>
        <dbReference type="PDB" id="5KC2"/>
    </source>
</evidence>
<evidence type="ECO:0007829" key="23">
    <source>
        <dbReference type="PDB" id="3GRE"/>
    </source>
</evidence>
<gene>
    <name evidence="17" type="primary">VPS15</name>
    <name evidence="18" type="synonym">GRD8</name>
    <name type="synonym">VAC4</name>
    <name type="synonym">VPL19</name>
    <name type="ordered locus">YBR097W</name>
    <name type="ORF">YBR0825</name>
</gene>
<keyword id="KW-0002">3D-structure</keyword>
<keyword id="KW-0067">ATP-binding</keyword>
<keyword id="KW-0072">Autophagy</keyword>
<keyword id="KW-0967">Endosome</keyword>
<keyword id="KW-0333">Golgi apparatus</keyword>
<keyword id="KW-0418">Kinase</keyword>
<keyword id="KW-0449">Lipoprotein</keyword>
<keyword id="KW-0472">Membrane</keyword>
<keyword id="KW-0519">Myristate</keyword>
<keyword id="KW-0547">Nucleotide-binding</keyword>
<keyword id="KW-0597">Phosphoprotein</keyword>
<keyword id="KW-0653">Protein transport</keyword>
<keyword id="KW-1185">Reference proteome</keyword>
<keyword id="KW-0677">Repeat</keyword>
<keyword id="KW-0723">Serine/threonine-protein kinase</keyword>
<keyword id="KW-0808">Transferase</keyword>
<keyword id="KW-0813">Transport</keyword>
<keyword id="KW-0853">WD repeat</keyword>
<dbReference type="EC" id="2.7.11.1" evidence="7 9 13"/>
<dbReference type="EMBL" id="M59835">
    <property type="protein sequence ID" value="AAA35214.1"/>
    <property type="molecule type" value="Genomic_DNA"/>
</dbReference>
<dbReference type="EMBL" id="X78993">
    <property type="protein sequence ID" value="CAA55602.1"/>
    <property type="molecule type" value="Genomic_DNA"/>
</dbReference>
<dbReference type="EMBL" id="Z35966">
    <property type="protein sequence ID" value="CAA85050.1"/>
    <property type="molecule type" value="Genomic_DNA"/>
</dbReference>
<dbReference type="EMBL" id="BK006936">
    <property type="protein sequence ID" value="DAA07218.2"/>
    <property type="molecule type" value="Genomic_DNA"/>
</dbReference>
<dbReference type="PIR" id="S48264">
    <property type="entry name" value="S48264"/>
</dbReference>
<dbReference type="RefSeq" id="NP_009655.2">
    <property type="nucleotide sequence ID" value="NM_001178445.2"/>
</dbReference>
<dbReference type="PDB" id="3GRE">
    <property type="method" value="X-ray"/>
    <property type="resolution" value="1.80 A"/>
    <property type="chains" value="A=1027-1454"/>
</dbReference>
<dbReference type="PDB" id="5DFZ">
    <property type="method" value="X-ray"/>
    <property type="resolution" value="4.40 A"/>
    <property type="chains" value="B=1-1454"/>
</dbReference>
<dbReference type="PDB" id="5KC2">
    <property type="method" value="EM"/>
    <property type="resolution" value="28.00 A"/>
    <property type="chains" value="B=1-1454"/>
</dbReference>
<dbReference type="PDBsum" id="3GRE"/>
<dbReference type="PDBsum" id="5DFZ"/>
<dbReference type="PDBsum" id="5KC2"/>
<dbReference type="EMDB" id="EMD-8235"/>
<dbReference type="SMR" id="P22219"/>
<dbReference type="BioGRID" id="32803">
    <property type="interactions" value="121"/>
</dbReference>
<dbReference type="ComplexPortal" id="CPX-1677">
    <property type="entry name" value="Phosphatidylinositol 3-kinase complex II"/>
</dbReference>
<dbReference type="ComplexPortal" id="CPX-1881">
    <property type="entry name" value="Phosphatidylinositol 3-kinase complex, class III, type I"/>
</dbReference>
<dbReference type="DIP" id="DIP-814N"/>
<dbReference type="FunCoup" id="P22219">
    <property type="interactions" value="1078"/>
</dbReference>
<dbReference type="IntAct" id="P22219">
    <property type="interactions" value="28"/>
</dbReference>
<dbReference type="MINT" id="P22219"/>
<dbReference type="STRING" id="4932.YBR097W"/>
<dbReference type="iPTMnet" id="P22219"/>
<dbReference type="PaxDb" id="4932-YBR097W"/>
<dbReference type="PeptideAtlas" id="P22219"/>
<dbReference type="EnsemblFungi" id="YBR097W_mRNA">
    <property type="protein sequence ID" value="YBR097W"/>
    <property type="gene ID" value="YBR097W"/>
</dbReference>
<dbReference type="GeneID" id="852394"/>
<dbReference type="KEGG" id="sce:YBR097W"/>
<dbReference type="AGR" id="SGD:S000000301"/>
<dbReference type="SGD" id="S000000301">
    <property type="gene designation" value="VPS15"/>
</dbReference>
<dbReference type="VEuPathDB" id="FungiDB:YBR097W"/>
<dbReference type="eggNOG" id="KOG1240">
    <property type="taxonomic scope" value="Eukaryota"/>
</dbReference>
<dbReference type="GeneTree" id="ENSGT00390000016225"/>
<dbReference type="HOGENOM" id="CLU_001696_0_1_1"/>
<dbReference type="InParanoid" id="P22219"/>
<dbReference type="OMA" id="YNLLCSW"/>
<dbReference type="OrthoDB" id="242910at2759"/>
<dbReference type="BioCyc" id="YEAST:G3O-29061-MONOMER"/>
<dbReference type="Reactome" id="R-SCE-1632852">
    <property type="pathway name" value="Macroautophagy"/>
</dbReference>
<dbReference type="Reactome" id="R-SCE-1660514">
    <property type="pathway name" value="Synthesis of PIPs at the Golgi membrane"/>
</dbReference>
<dbReference type="Reactome" id="R-SCE-1660516">
    <property type="pathway name" value="Synthesis of PIPs at the early endosome membrane"/>
</dbReference>
<dbReference type="Reactome" id="R-SCE-1660517">
    <property type="pathway name" value="Synthesis of PIPs at the late endosome membrane"/>
</dbReference>
<dbReference type="Reactome" id="R-SCE-5668599">
    <property type="pathway name" value="RHO GTPases Activate NADPH Oxidases"/>
</dbReference>
<dbReference type="BioGRID-ORCS" id="852394">
    <property type="hits" value="0 hits in 13 CRISPR screens"/>
</dbReference>
<dbReference type="EvolutionaryTrace" id="P22219"/>
<dbReference type="PRO" id="PR:P22219"/>
<dbReference type="Proteomes" id="UP000002311">
    <property type="component" value="Chromosome II"/>
</dbReference>
<dbReference type="RNAct" id="P22219">
    <property type="molecule type" value="protein"/>
</dbReference>
<dbReference type="GO" id="GO:0010008">
    <property type="term" value="C:endosome membrane"/>
    <property type="evidence" value="ECO:0000303"/>
    <property type="project" value="ComplexPortal"/>
</dbReference>
<dbReference type="GO" id="GO:0000329">
    <property type="term" value="C:fungal-type vacuole membrane"/>
    <property type="evidence" value="ECO:0007005"/>
    <property type="project" value="SGD"/>
</dbReference>
<dbReference type="GO" id="GO:0000139">
    <property type="term" value="C:Golgi membrane"/>
    <property type="evidence" value="ECO:0000303"/>
    <property type="project" value="ComplexPortal"/>
</dbReference>
<dbReference type="GO" id="GO:0005770">
    <property type="term" value="C:late endosome"/>
    <property type="evidence" value="ECO:0000318"/>
    <property type="project" value="GO_Central"/>
</dbReference>
<dbReference type="GO" id="GO:0005739">
    <property type="term" value="C:mitochondrion"/>
    <property type="evidence" value="ECO:0007005"/>
    <property type="project" value="SGD"/>
</dbReference>
<dbReference type="GO" id="GO:0071561">
    <property type="term" value="C:nucleus-vacuole junction"/>
    <property type="evidence" value="ECO:0000314"/>
    <property type="project" value="SGD"/>
</dbReference>
<dbReference type="GO" id="GO:0034045">
    <property type="term" value="C:phagophore assembly site membrane"/>
    <property type="evidence" value="ECO:0000303"/>
    <property type="project" value="ComplexPortal"/>
</dbReference>
<dbReference type="GO" id="GO:0034271">
    <property type="term" value="C:phosphatidylinositol 3-kinase complex, class III, type I"/>
    <property type="evidence" value="ECO:0000314"/>
    <property type="project" value="SGD"/>
</dbReference>
<dbReference type="GO" id="GO:0034272">
    <property type="term" value="C:phosphatidylinositol 3-kinase complex, class III, type II"/>
    <property type="evidence" value="ECO:0000314"/>
    <property type="project" value="SGD"/>
</dbReference>
<dbReference type="GO" id="GO:0120095">
    <property type="term" value="C:vacuole-isolation membrane contact site"/>
    <property type="evidence" value="ECO:0000314"/>
    <property type="project" value="SGD"/>
</dbReference>
<dbReference type="GO" id="GO:0005524">
    <property type="term" value="F:ATP binding"/>
    <property type="evidence" value="ECO:0007669"/>
    <property type="project" value="UniProtKB-KW"/>
</dbReference>
<dbReference type="GO" id="GO:0106310">
    <property type="term" value="F:protein serine kinase activity"/>
    <property type="evidence" value="ECO:0007669"/>
    <property type="project" value="RHEA"/>
</dbReference>
<dbReference type="GO" id="GO:0004674">
    <property type="term" value="F:protein serine/threonine kinase activity"/>
    <property type="evidence" value="ECO:0000314"/>
    <property type="project" value="SGD"/>
</dbReference>
<dbReference type="GO" id="GO:0043130">
    <property type="term" value="F:ubiquitin binding"/>
    <property type="evidence" value="ECO:0000314"/>
    <property type="project" value="SGD"/>
</dbReference>
<dbReference type="GO" id="GO:0006914">
    <property type="term" value="P:autophagy"/>
    <property type="evidence" value="ECO:0000314"/>
    <property type="project" value="ComplexPortal"/>
</dbReference>
<dbReference type="GO" id="GO:0051365">
    <property type="term" value="P:cellular response to potassium ion starvation"/>
    <property type="evidence" value="ECO:0000315"/>
    <property type="project" value="SGD"/>
</dbReference>
<dbReference type="GO" id="GO:0045324">
    <property type="term" value="P:late endosome to vacuole transport"/>
    <property type="evidence" value="ECO:0000315"/>
    <property type="project" value="SGD"/>
</dbReference>
<dbReference type="GO" id="GO:0016236">
    <property type="term" value="P:macroautophagy"/>
    <property type="evidence" value="ECO:0000315"/>
    <property type="project" value="SGD"/>
</dbReference>
<dbReference type="GO" id="GO:0000425">
    <property type="term" value="P:pexophagy"/>
    <property type="evidence" value="ECO:0000315"/>
    <property type="project" value="SGD"/>
</dbReference>
<dbReference type="GO" id="GO:0046854">
    <property type="term" value="P:phosphatidylinositol phosphate biosynthetic process"/>
    <property type="evidence" value="ECO:0000314"/>
    <property type="project" value="ComplexPortal"/>
</dbReference>
<dbReference type="GO" id="GO:0032968">
    <property type="term" value="P:positive regulation of transcription elongation by RNA polymerase II"/>
    <property type="evidence" value="ECO:0000315"/>
    <property type="project" value="SGD"/>
</dbReference>
<dbReference type="GO" id="GO:0045053">
    <property type="term" value="P:protein retention in Golgi apparatus"/>
    <property type="evidence" value="ECO:0000315"/>
    <property type="project" value="SGD"/>
</dbReference>
<dbReference type="GO" id="GO:0006623">
    <property type="term" value="P:protein targeting to vacuole"/>
    <property type="evidence" value="ECO:0000315"/>
    <property type="project" value="SGD"/>
</dbReference>
<dbReference type="GO" id="GO:0000011">
    <property type="term" value="P:vacuole inheritance"/>
    <property type="evidence" value="ECO:0000315"/>
    <property type="project" value="SGD"/>
</dbReference>
<dbReference type="CDD" id="cd13980">
    <property type="entry name" value="STKc_Vps15"/>
    <property type="match status" value="1"/>
</dbReference>
<dbReference type="FunFam" id="1.10.510.10:FF:000497">
    <property type="entry name" value="Phosphoinositide 3-kinase regulatory subunit"/>
    <property type="match status" value="1"/>
</dbReference>
<dbReference type="FunFam" id="1.25.10.10:FF:000602">
    <property type="entry name" value="Vps15p"/>
    <property type="match status" value="1"/>
</dbReference>
<dbReference type="Gene3D" id="1.25.10.10">
    <property type="entry name" value="Leucine-rich Repeat Variant"/>
    <property type="match status" value="1"/>
</dbReference>
<dbReference type="Gene3D" id="1.10.510.10">
    <property type="entry name" value="Transferase(Phosphotransferase) domain 1"/>
    <property type="match status" value="1"/>
</dbReference>
<dbReference type="Gene3D" id="2.130.10.10">
    <property type="entry name" value="YVTN repeat-like/Quinoprotein amine dehydrogenase"/>
    <property type="match status" value="2"/>
</dbReference>
<dbReference type="InterPro" id="IPR011989">
    <property type="entry name" value="ARM-like"/>
</dbReference>
<dbReference type="InterPro" id="IPR016024">
    <property type="entry name" value="ARM-type_fold"/>
</dbReference>
<dbReference type="InterPro" id="IPR021133">
    <property type="entry name" value="HEAT_type_2"/>
</dbReference>
<dbReference type="InterPro" id="IPR011009">
    <property type="entry name" value="Kinase-like_dom_sf"/>
</dbReference>
<dbReference type="InterPro" id="IPR000719">
    <property type="entry name" value="Prot_kinase_dom"/>
</dbReference>
<dbReference type="InterPro" id="IPR008271">
    <property type="entry name" value="Ser/Thr_kinase_AS"/>
</dbReference>
<dbReference type="InterPro" id="IPR045162">
    <property type="entry name" value="Vps15-like"/>
</dbReference>
<dbReference type="InterPro" id="IPR055231">
    <property type="entry name" value="VPS15-like_hel"/>
</dbReference>
<dbReference type="InterPro" id="IPR015943">
    <property type="entry name" value="WD40/YVTN_repeat-like_dom_sf"/>
</dbReference>
<dbReference type="InterPro" id="IPR036322">
    <property type="entry name" value="WD40_repeat_dom_sf"/>
</dbReference>
<dbReference type="InterPro" id="IPR001680">
    <property type="entry name" value="WD40_rpt"/>
</dbReference>
<dbReference type="PANTHER" id="PTHR17583">
    <property type="entry name" value="PHOSPHOINOSITIDE 3-KINASE REGULATORY SUBUNIT 4"/>
    <property type="match status" value="1"/>
</dbReference>
<dbReference type="PANTHER" id="PTHR17583:SF0">
    <property type="entry name" value="PHOSPHOINOSITIDE 3-KINASE REGULATORY SUBUNIT 4"/>
    <property type="match status" value="1"/>
</dbReference>
<dbReference type="Pfam" id="PF00069">
    <property type="entry name" value="Pkinase"/>
    <property type="match status" value="1"/>
</dbReference>
<dbReference type="Pfam" id="PF22956">
    <property type="entry name" value="VPS15-like_hel"/>
    <property type="match status" value="1"/>
</dbReference>
<dbReference type="SMART" id="SM00220">
    <property type="entry name" value="S_TKc"/>
    <property type="match status" value="1"/>
</dbReference>
<dbReference type="SMART" id="SM00320">
    <property type="entry name" value="WD40"/>
    <property type="match status" value="5"/>
</dbReference>
<dbReference type="SUPFAM" id="SSF48371">
    <property type="entry name" value="ARM repeat"/>
    <property type="match status" value="1"/>
</dbReference>
<dbReference type="SUPFAM" id="SSF56112">
    <property type="entry name" value="Protein kinase-like (PK-like)"/>
    <property type="match status" value="1"/>
</dbReference>
<dbReference type="SUPFAM" id="SSF50978">
    <property type="entry name" value="WD40 repeat-like"/>
    <property type="match status" value="1"/>
</dbReference>
<dbReference type="PROSITE" id="PS50077">
    <property type="entry name" value="HEAT_REPEAT"/>
    <property type="match status" value="1"/>
</dbReference>
<dbReference type="PROSITE" id="PS50011">
    <property type="entry name" value="PROTEIN_KINASE_DOM"/>
    <property type="match status" value="1"/>
</dbReference>
<dbReference type="PROSITE" id="PS00108">
    <property type="entry name" value="PROTEIN_KINASE_ST"/>
    <property type="match status" value="1"/>
</dbReference>
<dbReference type="PROSITE" id="PS50082">
    <property type="entry name" value="WD_REPEATS_2"/>
    <property type="match status" value="1"/>
</dbReference>
<organism>
    <name type="scientific">Saccharomyces cerevisiae (strain ATCC 204508 / S288c)</name>
    <name type="common">Baker's yeast</name>
    <dbReference type="NCBI Taxonomy" id="559292"/>
    <lineage>
        <taxon>Eukaryota</taxon>
        <taxon>Fungi</taxon>
        <taxon>Dikarya</taxon>
        <taxon>Ascomycota</taxon>
        <taxon>Saccharomycotina</taxon>
        <taxon>Saccharomycetes</taxon>
        <taxon>Saccharomycetales</taxon>
        <taxon>Saccharomycetaceae</taxon>
        <taxon>Saccharomyces</taxon>
    </lineage>
</organism>
<proteinExistence type="evidence at protein level"/>
<accession>P22219</accession>
<accession>D6VQ98</accession>
<protein>
    <recommendedName>
        <fullName evidence="17">Serine/threonine-protein kinase VPS15</fullName>
        <ecNumber evidence="7 9 13">2.7.11.1</ecNumber>
    </recommendedName>
    <alternativeName>
        <fullName evidence="18">Golgi-retention defective mutant protein 8</fullName>
    </alternativeName>
    <alternativeName>
        <fullName evidence="17">Vacuolar protein sorting-associated protein 15</fullName>
    </alternativeName>
</protein>
<sequence>MGAQLSLVVQASPSIAIFSYIDVLEEVHYVSQLNSSRFLKTCKALDPNGEIVIKVFIKPKDQYSLRPFLQRIRAQSFKLGQLPHVLNYSKLIETNRAGYMIRQHLKNNLYDRLSLRPYLQDIELKFIAFQLLNALKDIHNLNIVHGDIKTENILVTSWNWCILTDFAAFIKPVYLPEDNPGEFLFYFDTSKRRTCYLAPERFNSKLYQDGKSNNGRLTKEMDIFSLGCVIAEIFAEGRPIFNLSQLFKYKSNSYDVNREFLMEEMNSTDLRNLVLDMIQLDPSKRLSCDELLNKYRGIFFPDYFYTFIYDYFRNLVTMTTSTPISDNTCTNSTLEDNVKLLDETTEKIYRDFSQICHCLDFPLIKDGGEIGSDPPILESYKIEIEISRFLNTNLYFPQNYHLVLQQFTKVSEKIKSVKEECALLFISYLSHSIRSIVSTATKLKNLELLAVFAQFVSDENKIDRVVPYFVCCFEDSDQDVQALSLLTLIQVLTSVRKLNQLNENIFVDYLLPRLKRLLISNRQNTNYLRIVFANCLSDLAIIINRFQEFTFAQHCNDNSMDNNTEIMESSTKYSAKLIQSVEDLTVSFLTDNDTYVKMALLQNILPLCKFFGRERTNDIILSHLITYLNDKDPALRVSLIQTISGISILLGTVTLEQYILPLLIQTITDSEELVVISVLQSLKSLFKTGLIRKKYYIDISKTTSPLLLHPNNWIRQFTLMIIIEIINKLSKAEVYCILYPIIRPFFEFDVEFNFKSMISCCKQPVSRSVYNLLCSWSVRASKSLFWKKIITNHVDSFGNNRIEFITKNYSSKNYGFNKRDTKSSSSLKGIKTSSTVYSHDNKEIPLTAEDRNWIDKFHIIGLTEKDIWKIVALRGYVIRTARVMAANPDFPYNNSNYRPLVQNSPPNLNLTNIMPRNIFFDVEFAEESTSEGQDSNLENQQIYKYDESEKDSNKLNINGSKQLSTVMDINGSLIFKNKSIATTTSNLKNVFVQLEPTSYHMHSPNHGLKDNANVKPERKVVVSNSYEGDVESIEKFLSTFKILPPLRDYKEFGPIQEIVRSPNMGNLRGKLIATLMENEPNSITSSAVSPGETPYLITGSDQGVIKIWNLKEIIVGEVYSSSLTYDCSSTVTQITMIPNFDAFAVSSKDGQIIVLKVNHYQQESEVKFLNCECIRKINLKNFGKNEYAVRMRAFVNEEKSLLVALTNLSRVIIFDIRTLERLQIIENSPRHGAVSSICIDEECCVLILGTTRGIIDIWDIRFNVLIRSWSFGDHAPITHVEVCQFYGKNSVIVVGGSSKTFLTIWNFVKGHCQYAFINSDEQPSMEHFLPIEKGLEELNFCGIRSLNALSTISVSNDKILLTDEATSSIVMFSLNELSSSKAVISPSRFSDVFIPTQVTANLTMLLRKMKRTSTHSVDDSLYHHDIINSISTCEVDETPLLVACDNSGLIGIFQ</sequence>
<reference key="1">
    <citation type="journal article" date="1991" name="Cell">
        <title>A novel protein kinase homolog essential for protein sorting to the yeast lysosome-like vacuole.</title>
        <authorList>
            <person name="Herman P.K."/>
            <person name="Stack J.H."/>
            <person name="Demodena J.A."/>
            <person name="Emr S.D."/>
        </authorList>
    </citation>
    <scope>NUCLEOTIDE SEQUENCE [GENOMIC DNA]</scope>
    <scope>FUNCTION</scope>
    <scope>CATALYTIC ACTIVITY</scope>
    <scope>SUBCELLULAR LOCATION</scope>
    <scope>MUTAGENESIS OF ASP-165 AND GLU-200</scope>
    <scope>AUTOPHOSPHORYLATION</scope>
</reference>
<reference key="2">
    <citation type="journal article" date="1994" name="Yeast">
        <title>Analysis of a 70 kb region on the right arm of yeast chromosome II.</title>
        <authorList>
            <person name="Mannhaupt G."/>
            <person name="Stucka R."/>
            <person name="Ehnle S."/>
            <person name="Vetter I."/>
            <person name="Feldmann H."/>
        </authorList>
    </citation>
    <scope>NUCLEOTIDE SEQUENCE [GENOMIC DNA]</scope>
    <source>
        <strain>ATCC 204508 / S288c</strain>
    </source>
</reference>
<reference key="3">
    <citation type="journal article" date="1994" name="EMBO J.">
        <title>Complete DNA sequence of yeast chromosome II.</title>
        <authorList>
            <person name="Feldmann H."/>
            <person name="Aigle M."/>
            <person name="Aljinovic G."/>
            <person name="Andre B."/>
            <person name="Baclet M.C."/>
            <person name="Barthe C."/>
            <person name="Baur A."/>
            <person name="Becam A.-M."/>
            <person name="Biteau N."/>
            <person name="Boles E."/>
            <person name="Brandt T."/>
            <person name="Brendel M."/>
            <person name="Brueckner M."/>
            <person name="Bussereau F."/>
            <person name="Christiansen C."/>
            <person name="Contreras R."/>
            <person name="Crouzet M."/>
            <person name="Cziepluch C."/>
            <person name="Demolis N."/>
            <person name="Delaveau T."/>
            <person name="Doignon F."/>
            <person name="Domdey H."/>
            <person name="Duesterhus S."/>
            <person name="Dubois E."/>
            <person name="Dujon B."/>
            <person name="El Bakkoury M."/>
            <person name="Entian K.-D."/>
            <person name="Feuermann M."/>
            <person name="Fiers W."/>
            <person name="Fobo G.M."/>
            <person name="Fritz C."/>
            <person name="Gassenhuber J."/>
            <person name="Glansdorff N."/>
            <person name="Goffeau A."/>
            <person name="Grivell L.A."/>
            <person name="de Haan M."/>
            <person name="Hein C."/>
            <person name="Herbert C.J."/>
            <person name="Hollenberg C.P."/>
            <person name="Holmstroem K."/>
            <person name="Jacq C."/>
            <person name="Jacquet M."/>
            <person name="Jauniaux J.-C."/>
            <person name="Jonniaux J.-L."/>
            <person name="Kallesoee T."/>
            <person name="Kiesau P."/>
            <person name="Kirchrath L."/>
            <person name="Koetter P."/>
            <person name="Korol S."/>
            <person name="Liebl S."/>
            <person name="Logghe M."/>
            <person name="Lohan A.J.E."/>
            <person name="Louis E.J."/>
            <person name="Li Z.Y."/>
            <person name="Maat M.J."/>
            <person name="Mallet L."/>
            <person name="Mannhaupt G."/>
            <person name="Messenguy F."/>
            <person name="Miosga T."/>
            <person name="Molemans F."/>
            <person name="Mueller S."/>
            <person name="Nasr F."/>
            <person name="Obermaier B."/>
            <person name="Perea J."/>
            <person name="Pierard A."/>
            <person name="Piravandi E."/>
            <person name="Pohl F.M."/>
            <person name="Pohl T.M."/>
            <person name="Potier S."/>
            <person name="Proft M."/>
            <person name="Purnelle B."/>
            <person name="Ramezani Rad M."/>
            <person name="Rieger M."/>
            <person name="Rose M."/>
            <person name="Schaaff-Gerstenschlaeger I."/>
            <person name="Scherens B."/>
            <person name="Schwarzlose C."/>
            <person name="Skala J."/>
            <person name="Slonimski P.P."/>
            <person name="Smits P.H.M."/>
            <person name="Souciet J.-L."/>
            <person name="Steensma H.Y."/>
            <person name="Stucka R."/>
            <person name="Urrestarazu L.A."/>
            <person name="van der Aart Q.J.M."/>
            <person name="Van Dyck L."/>
            <person name="Vassarotti A."/>
            <person name="Vetter I."/>
            <person name="Vierendeels F."/>
            <person name="Vissers S."/>
            <person name="Wagner G."/>
            <person name="de Wergifosse P."/>
            <person name="Wolfe K.H."/>
            <person name="Zagulski M."/>
            <person name="Zimmermann F.K."/>
            <person name="Mewes H.-W."/>
            <person name="Kleine K."/>
        </authorList>
    </citation>
    <scope>NUCLEOTIDE SEQUENCE [LARGE SCALE GENOMIC DNA]</scope>
    <source>
        <strain>ATCC 204508 / S288c</strain>
    </source>
</reference>
<reference key="4">
    <citation type="journal article" date="2014" name="G3 (Bethesda)">
        <title>The reference genome sequence of Saccharomyces cerevisiae: Then and now.</title>
        <authorList>
            <person name="Engel S.R."/>
            <person name="Dietrich F.S."/>
            <person name="Fisk D.G."/>
            <person name="Binkley G."/>
            <person name="Balakrishnan R."/>
            <person name="Costanzo M.C."/>
            <person name="Dwight S.S."/>
            <person name="Hitz B.C."/>
            <person name="Karra K."/>
            <person name="Nash R.S."/>
            <person name="Weng S."/>
            <person name="Wong E.D."/>
            <person name="Lloyd P."/>
            <person name="Skrzypek M.S."/>
            <person name="Miyasato S.R."/>
            <person name="Simison M."/>
            <person name="Cherry J.M."/>
        </authorList>
    </citation>
    <scope>GENOME REANNOTATION</scope>
    <scope>SEQUENCE REVISION TO 134 AND 851</scope>
    <source>
        <strain>ATCC 204508 / S288c</strain>
    </source>
</reference>
<reference key="5">
    <citation type="journal article" date="1988" name="Mol. Cell. Biol.">
        <title>Protein sorting in Saccharomyces cerevisiae: isolation of mutants defective in the delivery and processing of multiple vacuolar hydrolases.</title>
        <authorList>
            <person name="Robinson J.S."/>
            <person name="Klionsky D.J."/>
            <person name="Banta L.M."/>
            <person name="Emr S.D."/>
        </authorList>
    </citation>
    <scope>FUNCTION</scope>
</reference>
<reference key="6">
    <citation type="journal article" date="1991" name="EMBO J.">
        <title>A genetic and structural analysis of the yeast Vps15 protein kinase: evidence for a direct role of Vps15p in vacuolar protein delivery.</title>
        <authorList>
            <person name="Herman P.K."/>
            <person name="Stack J.H."/>
            <person name="Emr S.D."/>
        </authorList>
    </citation>
    <scope>FUNCTION</scope>
    <scope>CATALYTIC ACTIVITY</scope>
    <scope>AUTOPHOSPHORYLATION</scope>
    <scope>DOMAIN</scope>
    <scope>MUTAGENESIS OF GLY-2; LYS-54; ASP-147; LYS-149 AND GLU-151</scope>
    <scope>MYRISTOYLATION AT GLY-2</scope>
</reference>
<reference key="7">
    <citation type="journal article" date="1993" name="EMBO J.">
        <title>A membrane-associated complex containing the Vps15 protein kinase and the Vps34 PI 3-kinase is essential for protein sorting to the yeast lysosome-like vacuole.</title>
        <authorList>
            <person name="Stack J.H."/>
            <person name="Herman P.K."/>
            <person name="Schu P.V."/>
            <person name="Emr S.D."/>
        </authorList>
    </citation>
    <scope>FUNCTION</scope>
    <scope>INTERACTION WITH VPS34</scope>
    <scope>MUTAGENESIS OF GLU-200</scope>
</reference>
<reference key="8">
    <citation type="journal article" date="1993" name="J. Cell Biol.">
        <title>Yeast vacuolar proenzymes are sorted in the late Golgi complex and transported to the vacuole via a prevacuolar endosome-like compartment.</title>
        <authorList>
            <person name="Vida T.A."/>
            <person name="Huyer G."/>
            <person name="Emr S.D."/>
        </authorList>
    </citation>
    <scope>FUNCTION</scope>
</reference>
<reference key="9">
    <citation type="journal article" date="1994" name="J. Biol. Chem.">
        <title>Vps34p required for yeast vacuolar protein sorting is a multiple specificity kinase that exhibits both protein kinase and phosphatidylinositol-specific PI 3-kinase activities.</title>
        <authorList>
            <person name="Stack J.H."/>
            <person name="Emr S.D."/>
        </authorList>
    </citation>
    <scope>FUNCTION</scope>
    <scope>CATALYTIC ACTIVITY</scope>
    <scope>AUTOPHOSPHORYLATION</scope>
</reference>
<reference key="10">
    <citation type="journal article" date="1996" name="Mol. Cell. Biol.">
        <title>The newly identified yeast GRD genes are required for retention of late-Golgi membrane proteins.</title>
        <authorList>
            <person name="Nothwehr S.F."/>
            <person name="Bryant N.J."/>
            <person name="Stevens T.H."/>
        </authorList>
    </citation>
    <scope>FUNCTION</scope>
</reference>
<reference key="11">
    <citation type="journal article" date="2001" name="J. Cell Biol.">
        <title>Two distinct Vps34 phosphatidylinositol 3-kinase complexes function in autophagy and carboxypeptidase Y sorting in Saccharomyces cerevisiae.</title>
        <authorList>
            <person name="Kihara A."/>
            <person name="Noda T."/>
            <person name="Ishihara N."/>
            <person name="Ohsumi Y."/>
        </authorList>
    </citation>
    <scope>FUNCTION</scope>
    <scope>SUBCELLULAR LOCATION</scope>
    <scope>INTERACTION WITH VPS30; VPS34; VPS38 AND ATG14</scope>
</reference>
<reference key="12">
    <citation type="journal article" date="2002" name="J. Cell Sci.">
        <title>Retromer function in endosome-to-Golgi retrograde transport is regulated by the yeast Vps34 PtdIns 3-kinase.</title>
        <authorList>
            <person name="Burda P."/>
            <person name="Padilla S.M."/>
            <person name="Sarkar S."/>
            <person name="Emr S.D."/>
        </authorList>
    </citation>
    <scope>FUNCTION</scope>
</reference>
<reference key="13">
    <citation type="journal article" date="2003" name="Nature">
        <title>Global analysis of protein localization in budding yeast.</title>
        <authorList>
            <person name="Huh W.-K."/>
            <person name="Falvo J.V."/>
            <person name="Gerke L.C."/>
            <person name="Carroll A.S."/>
            <person name="Howson R.W."/>
            <person name="Weissman J.S."/>
            <person name="O'Shea E.K."/>
        </authorList>
    </citation>
    <scope>SUBCELLULAR LOCATION [LARGE SCALE ANALYSIS]</scope>
</reference>
<reference key="14">
    <citation type="journal article" date="2003" name="Nature">
        <title>Global analysis of protein expression in yeast.</title>
        <authorList>
            <person name="Ghaemmaghami S."/>
            <person name="Huh W.-K."/>
            <person name="Bower K."/>
            <person name="Howson R.W."/>
            <person name="Belle A."/>
            <person name="Dephoure N."/>
            <person name="O'Shea E.K."/>
            <person name="Weissman J.S."/>
        </authorList>
    </citation>
    <scope>LEVEL OF PROTEIN EXPRESSION [LARGE SCALE ANALYSIS]</scope>
</reference>
<reference key="15">
    <citation type="journal article" date="2013" name="J. Cell Biol.">
        <title>Atg38 is required for autophagy-specific phosphatidylinositol 3-kinase complex integrity.</title>
        <authorList>
            <person name="Araki Y."/>
            <person name="Ku W.C."/>
            <person name="Akioka M."/>
            <person name="May A.I."/>
            <person name="Hayashi Y."/>
            <person name="Arisaka F."/>
            <person name="Ishihama Y."/>
            <person name="Ohsumi Y."/>
        </authorList>
    </citation>
    <scope>IDENTIFICATION BY MASS SPECTROMETRY</scope>
    <scope>IDENTIFICATION IN THE AUTOPHAGY-SPECIFIC VPS34 PI3-KINASE COMPLEX I</scope>
</reference>
<reference key="16">
    <citation type="journal article" date="2017" name="Mol. Cell. Biol.">
        <title>An In vitro TORC1 kinase assay that recapitulates the Gtr-independent glutamine-responsive TORC1 activation mechanism on yeast vacuoles.</title>
        <authorList>
            <person name="Tanigawa M."/>
            <person name="Maeda T."/>
        </authorList>
    </citation>
    <scope>DISRUPTION PHENOTYPE</scope>
</reference>
<reference evidence="20" key="17">
    <citation type="journal article" date="2009" name="Biochemistry">
        <title>Structure and function of Vps15 in the endosomal G protein signaling pathway.</title>
        <authorList>
            <person name="Heenan E.J."/>
            <person name="Vanhooke J.L."/>
            <person name="Temple B.R."/>
            <person name="Betts L."/>
            <person name="Sondek J.E."/>
            <person name="Dohlman H.G."/>
        </authorList>
    </citation>
    <scope>X-RAY CRYSTALLOGRAPHY (1.80 ANGSTROMS) OF 1027-1454</scope>
    <scope>DOMAIN</scope>
    <scope>FUNCTION</scope>
    <scope>INTERACTION WITH GPA1 AND ATG14</scope>
    <scope>MUTAGENESIS OF ARG-1261</scope>
</reference>
<reference evidence="21" key="18">
    <citation type="journal article" date="2015" name="Science">
        <title>Structure and flexibility of the endosomal Vps34 complex reveals the basis of its function on membranes.</title>
        <authorList>
            <person name="Rostislavleva K."/>
            <person name="Soler N."/>
            <person name="Ohashi Y."/>
            <person name="Zhang L."/>
            <person name="Pardon E."/>
            <person name="Burke J.E."/>
            <person name="Masson G.R."/>
            <person name="Johnson C."/>
            <person name="Steyaert J."/>
            <person name="Ktistakis N.T."/>
            <person name="Williams R.L."/>
        </authorList>
    </citation>
    <scope>X-RAY CRYSTALLOGRAPHY (4.40 ANGSTROMS) WITHIN THE VPS34 PI3-KINASE COMPLEX II</scope>
    <scope>SUBUNIT</scope>
</reference>
<reference evidence="22" key="19">
    <citation type="journal article" date="2016" name="Autophagy">
        <title>Characterization of Atg38 and NRBF2, a fifth subunit of the autophagic Vps34/PIK3C3 complex.</title>
        <authorList>
            <person name="Ohashi Y."/>
            <person name="Soler N."/>
            <person name="Garcia Ortegon M."/>
            <person name="Zhang L."/>
            <person name="Kirsten M.L."/>
            <person name="Perisic O."/>
            <person name="Masson G.R."/>
            <person name="Burke J.E."/>
            <person name="Jakobi A.J."/>
            <person name="Apostolakis A.A."/>
            <person name="Johnson C.M."/>
            <person name="Ohashi M."/>
            <person name="Ktistakis N.T."/>
            <person name="Sachse C."/>
            <person name="Williams R.L."/>
        </authorList>
    </citation>
    <scope>STRUCTURE BY ELECTRON MICROSCOPY (28.00 ANGSTROMS) IN VOMPLEX WITH VPS34</scope>
    <scope>INTERACTION WITH VPS34</scope>
</reference>